<organism>
    <name type="scientific">Chromohalobacter salexigens (strain ATCC BAA-138 / DSM 3043 / CIP 106854 / NCIMB 13768 / 1H11)</name>
    <dbReference type="NCBI Taxonomy" id="290398"/>
    <lineage>
        <taxon>Bacteria</taxon>
        <taxon>Pseudomonadati</taxon>
        <taxon>Pseudomonadota</taxon>
        <taxon>Gammaproteobacteria</taxon>
        <taxon>Oceanospirillales</taxon>
        <taxon>Halomonadaceae</taxon>
        <taxon>Chromohalobacter</taxon>
    </lineage>
</organism>
<sequence length="235" mass="25016">MRKIAIIGAMAEEVERLASHLENRQTRQHAGSTFHSGHLHGVEVVILQSGIGKVNAAVGTTQLLEAYQPDAVINTGSAGGFGVDLDVGDVVISSEVRHHDVDAVVFGYEYGQVPQMPAAYAPDPHLVNVARECIEGLGELRVAEGLICTGDIFMADKAAVDQARERFPSMLAAEMEAAAIAQTCHLYGCPFVVIRALSDIAGKESDLSFQAFIEKAATHSAMMVEAMVKRLGTAS</sequence>
<name>MTNN_CHRSD</name>
<dbReference type="EC" id="3.2.2.9" evidence="1"/>
<dbReference type="EMBL" id="CP000285">
    <property type="protein sequence ID" value="ABE59401.1"/>
    <property type="molecule type" value="Genomic_DNA"/>
</dbReference>
<dbReference type="RefSeq" id="WP_011507347.1">
    <property type="nucleotide sequence ID" value="NC_007963.1"/>
</dbReference>
<dbReference type="SMR" id="Q1QVV7"/>
<dbReference type="STRING" id="290398.Csal_2050"/>
<dbReference type="GeneID" id="95334765"/>
<dbReference type="KEGG" id="csa:Csal_2050"/>
<dbReference type="eggNOG" id="COG0775">
    <property type="taxonomic scope" value="Bacteria"/>
</dbReference>
<dbReference type="HOGENOM" id="CLU_031248_2_2_6"/>
<dbReference type="OrthoDB" id="9792278at2"/>
<dbReference type="UniPathway" id="UPA00904">
    <property type="reaction ID" value="UER00871"/>
</dbReference>
<dbReference type="Proteomes" id="UP000000239">
    <property type="component" value="Chromosome"/>
</dbReference>
<dbReference type="GO" id="GO:0005829">
    <property type="term" value="C:cytosol"/>
    <property type="evidence" value="ECO:0007669"/>
    <property type="project" value="TreeGrafter"/>
</dbReference>
<dbReference type="GO" id="GO:0008782">
    <property type="term" value="F:adenosylhomocysteine nucleosidase activity"/>
    <property type="evidence" value="ECO:0007669"/>
    <property type="project" value="UniProtKB-UniRule"/>
</dbReference>
<dbReference type="GO" id="GO:0008930">
    <property type="term" value="F:methylthioadenosine nucleosidase activity"/>
    <property type="evidence" value="ECO:0007669"/>
    <property type="project" value="UniProtKB-UniRule"/>
</dbReference>
<dbReference type="GO" id="GO:0019509">
    <property type="term" value="P:L-methionine salvage from methylthioadenosine"/>
    <property type="evidence" value="ECO:0007669"/>
    <property type="project" value="UniProtKB-UniRule"/>
</dbReference>
<dbReference type="GO" id="GO:0019284">
    <property type="term" value="P:L-methionine salvage from S-adenosylmethionine"/>
    <property type="evidence" value="ECO:0007669"/>
    <property type="project" value="TreeGrafter"/>
</dbReference>
<dbReference type="GO" id="GO:0009164">
    <property type="term" value="P:nucleoside catabolic process"/>
    <property type="evidence" value="ECO:0007669"/>
    <property type="project" value="InterPro"/>
</dbReference>
<dbReference type="CDD" id="cd09008">
    <property type="entry name" value="MTAN"/>
    <property type="match status" value="1"/>
</dbReference>
<dbReference type="FunFam" id="3.40.50.1580:FF:000001">
    <property type="entry name" value="MTA/SAH nucleosidase family protein"/>
    <property type="match status" value="1"/>
</dbReference>
<dbReference type="Gene3D" id="3.40.50.1580">
    <property type="entry name" value="Nucleoside phosphorylase domain"/>
    <property type="match status" value="1"/>
</dbReference>
<dbReference type="HAMAP" id="MF_01684">
    <property type="entry name" value="Salvage_MtnN"/>
    <property type="match status" value="1"/>
</dbReference>
<dbReference type="InterPro" id="IPR010049">
    <property type="entry name" value="MTA_SAH_Nsdase"/>
</dbReference>
<dbReference type="InterPro" id="IPR000845">
    <property type="entry name" value="Nucleoside_phosphorylase_d"/>
</dbReference>
<dbReference type="InterPro" id="IPR035994">
    <property type="entry name" value="Nucleoside_phosphorylase_sf"/>
</dbReference>
<dbReference type="NCBIfam" id="TIGR01704">
    <property type="entry name" value="MTA_SAH-Nsdase"/>
    <property type="match status" value="1"/>
</dbReference>
<dbReference type="NCBIfam" id="NF004079">
    <property type="entry name" value="PRK05584.1"/>
    <property type="match status" value="1"/>
</dbReference>
<dbReference type="PANTHER" id="PTHR46832">
    <property type="entry name" value="5'-METHYLTHIOADENOSINE/S-ADENOSYLHOMOCYSTEINE NUCLEOSIDASE"/>
    <property type="match status" value="1"/>
</dbReference>
<dbReference type="PANTHER" id="PTHR46832:SF1">
    <property type="entry name" value="5'-METHYLTHIOADENOSINE_S-ADENOSYLHOMOCYSTEINE NUCLEOSIDASE"/>
    <property type="match status" value="1"/>
</dbReference>
<dbReference type="Pfam" id="PF01048">
    <property type="entry name" value="PNP_UDP_1"/>
    <property type="match status" value="1"/>
</dbReference>
<dbReference type="SUPFAM" id="SSF53167">
    <property type="entry name" value="Purine and uridine phosphorylases"/>
    <property type="match status" value="1"/>
</dbReference>
<protein>
    <recommendedName>
        <fullName evidence="1">5'-methylthioadenosine/S-adenosylhomocysteine nucleosidase</fullName>
        <shortName evidence="1">MTA/SAH nucleosidase</shortName>
        <shortName evidence="1">MTAN</shortName>
        <ecNumber evidence="1">3.2.2.9</ecNumber>
    </recommendedName>
    <alternativeName>
        <fullName evidence="1">5'-deoxyadenosine nucleosidase</fullName>
        <shortName evidence="1">DOA nucleosidase</shortName>
        <shortName evidence="1">dAdo nucleosidase</shortName>
    </alternativeName>
    <alternativeName>
        <fullName evidence="1">5'-methylthioadenosine nucleosidase</fullName>
        <shortName evidence="1">MTA nucleosidase</shortName>
    </alternativeName>
    <alternativeName>
        <fullName evidence="1">S-adenosylhomocysteine nucleosidase</fullName>
        <shortName evidence="1">AdoHcy nucleosidase</shortName>
        <shortName evidence="1">SAH nucleosidase</shortName>
        <shortName evidence="1">SRH nucleosidase</shortName>
    </alternativeName>
</protein>
<accession>Q1QVV7</accession>
<feature type="chain" id="PRO_0000359285" description="5'-methylthioadenosine/S-adenosylhomocysteine nucleosidase">
    <location>
        <begin position="1"/>
        <end position="235"/>
    </location>
</feature>
<feature type="active site" description="Proton acceptor" evidence="1">
    <location>
        <position position="13"/>
    </location>
</feature>
<feature type="active site" description="Proton donor" evidence="1">
    <location>
        <position position="199"/>
    </location>
</feature>
<feature type="binding site" evidence="1">
    <location>
        <position position="79"/>
    </location>
    <ligand>
        <name>substrate</name>
    </ligand>
</feature>
<feature type="binding site" evidence="1">
    <location>
        <position position="154"/>
    </location>
    <ligand>
        <name>substrate</name>
    </ligand>
</feature>
<feature type="binding site" evidence="1">
    <location>
        <begin position="175"/>
        <end position="176"/>
    </location>
    <ligand>
        <name>substrate</name>
    </ligand>
</feature>
<keyword id="KW-0028">Amino-acid biosynthesis</keyword>
<keyword id="KW-0378">Hydrolase</keyword>
<keyword id="KW-0486">Methionine biosynthesis</keyword>
<keyword id="KW-1185">Reference proteome</keyword>
<evidence type="ECO:0000255" key="1">
    <source>
        <dbReference type="HAMAP-Rule" id="MF_01684"/>
    </source>
</evidence>
<reference key="1">
    <citation type="journal article" date="2011" name="Stand. Genomic Sci.">
        <title>Complete genome sequence of the halophilic and highly halotolerant Chromohalobacter salexigens type strain (1H11(T)).</title>
        <authorList>
            <person name="Copeland A."/>
            <person name="O'Connor K."/>
            <person name="Lucas S."/>
            <person name="Lapidus A."/>
            <person name="Berry K.W."/>
            <person name="Detter J.C."/>
            <person name="Del Rio T.G."/>
            <person name="Hammon N."/>
            <person name="Dalin E."/>
            <person name="Tice H."/>
            <person name="Pitluck S."/>
            <person name="Bruce D."/>
            <person name="Goodwin L."/>
            <person name="Han C."/>
            <person name="Tapia R."/>
            <person name="Saunders E."/>
            <person name="Schmutz J."/>
            <person name="Brettin T."/>
            <person name="Larimer F."/>
            <person name="Land M."/>
            <person name="Hauser L."/>
            <person name="Vargas C."/>
            <person name="Nieto J.J."/>
            <person name="Kyrpides N.C."/>
            <person name="Ivanova N."/>
            <person name="Goker M."/>
            <person name="Klenk H.P."/>
            <person name="Csonka L.N."/>
            <person name="Woyke T."/>
        </authorList>
    </citation>
    <scope>NUCLEOTIDE SEQUENCE [LARGE SCALE GENOMIC DNA]</scope>
    <source>
        <strain>ATCC BAA-138 / DSM 3043 / CIP 106854 / NCIMB 13768 / 1H11</strain>
    </source>
</reference>
<comment type="function">
    <text evidence="1">Catalyzes the irreversible cleavage of the glycosidic bond in both 5'-methylthioadenosine (MTA) and S-adenosylhomocysteine (SAH/AdoHcy) to adenine and the corresponding thioribose, 5'-methylthioribose and S-ribosylhomocysteine, respectively. Also cleaves 5'-deoxyadenosine, a toxic by-product of radical S-adenosylmethionine (SAM) enzymes, into 5-deoxyribose and adenine.</text>
</comment>
<comment type="catalytic activity">
    <reaction evidence="1">
        <text>S-adenosyl-L-homocysteine + H2O = S-(5-deoxy-D-ribos-5-yl)-L-homocysteine + adenine</text>
        <dbReference type="Rhea" id="RHEA:17805"/>
        <dbReference type="ChEBI" id="CHEBI:15377"/>
        <dbReference type="ChEBI" id="CHEBI:16708"/>
        <dbReference type="ChEBI" id="CHEBI:57856"/>
        <dbReference type="ChEBI" id="CHEBI:58195"/>
        <dbReference type="EC" id="3.2.2.9"/>
    </reaction>
</comment>
<comment type="catalytic activity">
    <reaction evidence="1">
        <text>S-methyl-5'-thioadenosine + H2O = 5-(methylsulfanyl)-D-ribose + adenine</text>
        <dbReference type="Rhea" id="RHEA:13617"/>
        <dbReference type="ChEBI" id="CHEBI:15377"/>
        <dbReference type="ChEBI" id="CHEBI:16708"/>
        <dbReference type="ChEBI" id="CHEBI:17509"/>
        <dbReference type="ChEBI" id="CHEBI:78440"/>
        <dbReference type="EC" id="3.2.2.9"/>
    </reaction>
</comment>
<comment type="catalytic activity">
    <reaction evidence="1">
        <text>5'-deoxyadenosine + H2O = 5-deoxy-D-ribose + adenine</text>
        <dbReference type="Rhea" id="RHEA:29859"/>
        <dbReference type="ChEBI" id="CHEBI:15377"/>
        <dbReference type="ChEBI" id="CHEBI:16708"/>
        <dbReference type="ChEBI" id="CHEBI:17319"/>
        <dbReference type="ChEBI" id="CHEBI:149540"/>
        <dbReference type="EC" id="3.2.2.9"/>
    </reaction>
    <physiologicalReaction direction="left-to-right" evidence="1">
        <dbReference type="Rhea" id="RHEA:29860"/>
    </physiologicalReaction>
</comment>
<comment type="pathway">
    <text evidence="1">Amino-acid biosynthesis; L-methionine biosynthesis via salvage pathway; S-methyl-5-thio-alpha-D-ribose 1-phosphate from S-methyl-5'-thioadenosine (hydrolase route): step 1/2.</text>
</comment>
<comment type="similarity">
    <text evidence="1">Belongs to the PNP/UDP phosphorylase family. MtnN subfamily.</text>
</comment>
<proteinExistence type="inferred from homology"/>
<gene>
    <name evidence="1" type="primary">mtnN</name>
    <name type="ordered locus">Csal_2050</name>
</gene>